<dbReference type="EMBL" id="AY261360">
    <property type="status" value="NOT_ANNOTATED_CDS"/>
    <property type="molecule type" value="Genomic_DNA"/>
</dbReference>
<dbReference type="SMR" id="P0CA01"/>
<dbReference type="Proteomes" id="UP000000861">
    <property type="component" value="Segment"/>
</dbReference>
<dbReference type="GO" id="GO:0042025">
    <property type="term" value="C:host cell nucleus"/>
    <property type="evidence" value="ECO:0007669"/>
    <property type="project" value="UniProtKB-SubCell"/>
</dbReference>
<dbReference type="GO" id="GO:0044220">
    <property type="term" value="C:host cell perinuclear region of cytoplasm"/>
    <property type="evidence" value="ECO:0007669"/>
    <property type="project" value="UniProtKB-SubCell"/>
</dbReference>
<dbReference type="GO" id="GO:0044423">
    <property type="term" value="C:virion component"/>
    <property type="evidence" value="ECO:0007669"/>
    <property type="project" value="UniProtKB-KW"/>
</dbReference>
<accession>P0CA01</accession>
<reference key="1">
    <citation type="submission" date="2003-03" db="EMBL/GenBank/DDBJ databases">
        <title>African swine fever virus genomes.</title>
        <authorList>
            <person name="Kutish G.F."/>
            <person name="Rock D.L."/>
        </authorList>
    </citation>
    <scope>NUCLEOTIDE SEQUENCE [LARGE SCALE GENOMIC DNA]</scope>
</reference>
<feature type="initiator methionine" description="Removed">
    <location>
        <position position="1"/>
    </location>
</feature>
<feature type="chain" id="PRO_0000454832" description="p5">
    <location>
        <begin position="2"/>
        <end position="44"/>
    </location>
</feature>
<feature type="chain" id="PRO_0000373422" description="Polyprotein pp220" evidence="2">
    <location>
        <begin position="45"/>
        <end position="2475"/>
    </location>
</feature>
<feature type="chain" id="PRO_0000373423" description="p34">
    <location>
        <begin position="45"/>
        <end position="368"/>
    </location>
</feature>
<feature type="chain" id="PRO_0000373424" description="p14">
    <location>
        <begin position="369"/>
        <end position="522"/>
    </location>
</feature>
<feature type="chain" id="PRO_0000373425" description="p37">
    <location>
        <begin position="523"/>
        <end position="893"/>
    </location>
</feature>
<feature type="chain" id="PRO_0000373426" description="p150">
    <location>
        <begin position="894"/>
        <end position="2475"/>
    </location>
</feature>
<feature type="coiled-coil region" evidence="2">
    <location>
        <begin position="2185"/>
        <end position="2212"/>
    </location>
</feature>
<feature type="site" description="Cleavage; by viral protease S273R" evidence="1">
    <location>
        <begin position="44"/>
        <end position="45"/>
    </location>
</feature>
<feature type="site" description="Cleavage; by viral protease S273R" evidence="1">
    <location>
        <begin position="368"/>
        <end position="369"/>
    </location>
</feature>
<feature type="site" description="Cleavage; by viral protease S273R" evidence="1">
    <location>
        <begin position="522"/>
        <end position="523"/>
    </location>
</feature>
<feature type="site" description="Cleavage; by viral protease S273R" evidence="1">
    <location>
        <begin position="893"/>
        <end position="894"/>
    </location>
</feature>
<feature type="lipid moiety-binding region" description="N-myristoyl glycine; by host" evidence="1">
    <location>
        <position position="2"/>
    </location>
</feature>
<gene>
    <name type="ordered locus">Ken-104</name>
</gene>
<proteinExistence type="inferred from homology"/>
<organism>
    <name type="scientific">African swine fever virus (isolate Pig/Kenya/KEN-50/1950)</name>
    <name type="common">ASFV</name>
    <dbReference type="NCBI Taxonomy" id="561445"/>
    <lineage>
        <taxon>Viruses</taxon>
        <taxon>Varidnaviria</taxon>
        <taxon>Bamfordvirae</taxon>
        <taxon>Nucleocytoviricota</taxon>
        <taxon>Pokkesviricetes</taxon>
        <taxon>Asfuvirales</taxon>
        <taxon>Asfarviridae</taxon>
        <taxon>Asfivirus</taxon>
        <taxon>African swine fever virus</taxon>
    </lineage>
</organism>
<comment type="function">
    <molecule>Polyprotein pp220</molecule>
    <text evidence="1">Essential for the core assembly. Its myristoyl moiety may function as a membrane-anchoring signal to bind the developing core shell to the inner viral envelope.</text>
</comment>
<comment type="function">
    <molecule>p34</molecule>
    <text evidence="1">The structural protein p34 is a component of the virus core shell.</text>
</comment>
<comment type="function">
    <molecule>p14</molecule>
    <text evidence="1">The structural protein p14 is a component of the virus core shell.</text>
</comment>
<comment type="function">
    <molecule>p37</molecule>
    <text evidence="1">The structural protein p37 is a component of the virus core shell.</text>
</comment>
<comment type="function">
    <molecule>p150</molecule>
    <text evidence="1">The structural protein p150 is a component of the virus core shell.</text>
</comment>
<comment type="subcellular location">
    <molecule>Polyprotein pp220</molecule>
    <subcellularLocation>
        <location evidence="1">Host cytoplasm</location>
        <location evidence="1">Host perinuclear region</location>
    </subcellularLocation>
    <text evidence="1">Found in perinuclear cytoplasmic viral factories during assembly.</text>
</comment>
<comment type="subcellular location">
    <molecule>p34</molecule>
    <subcellularLocation>
        <location evidence="1">Virion</location>
    </subcellularLocation>
    <subcellularLocation>
        <location evidence="1">Host cytoplasm</location>
        <location evidence="1">Host perinuclear region</location>
    </subcellularLocation>
    <text evidence="1">Localizes to the viral factory at 16 hpi. In the virion, located in the core shell, which functions like a matrix between the DNA-containing nucleoid and the inner envelope.</text>
</comment>
<comment type="subcellular location">
    <molecule>p14</molecule>
    <subcellularLocation>
        <location evidence="1">Virion</location>
    </subcellularLocation>
    <subcellularLocation>
        <location evidence="1">Host cytoplasm</location>
        <location evidence="1">Host perinuclear region</location>
    </subcellularLocation>
    <text evidence="1">Found in perinuclear cytoplasmic viral factories during assembly. In the virion, located in the core shell, which functions like a matrix between the DNA-containing nucleoid and the inner envelope.</text>
</comment>
<comment type="subcellular location">
    <molecule>p37</molecule>
    <subcellularLocation>
        <location evidence="1">Virion</location>
    </subcellularLocation>
    <subcellularLocation>
        <location evidence="1">Host cytoplasm</location>
        <location evidence="1">Host perinuclear region</location>
    </subcellularLocation>
    <subcellularLocation>
        <location evidence="1">Host nucleus</location>
    </subcellularLocation>
    <text evidence="1">Found in perinuclear cytoplasmic viral factories during assembly. In the virion, located in the core shell, which functions like a matrix between the DNA-containing nucleoid and the inner envelope.</text>
</comment>
<comment type="subcellular location">
    <molecule>p150</molecule>
    <subcellularLocation>
        <location evidence="1">Virion</location>
    </subcellularLocation>
    <subcellularLocation>
        <location evidence="1">Host cytoplasm</location>
        <location evidence="1">Host perinuclear region</location>
    </subcellularLocation>
    <text evidence="1">Found in perinuclear cytoplasmic viral factories during assembly. In the virion, located in the core shell, which functions like a matrix between the DNA-containing nucleoid and the inner envelope.</text>
</comment>
<comment type="subcellular location">
    <molecule>p5</molecule>
    <subcellularLocation>
        <location evidence="1">Virion</location>
    </subcellularLocation>
</comment>
<comment type="induction">
    <text evidence="3">Expressed in the late phase of the viral replicative cycle.</text>
</comment>
<comment type="PTM">
    <molecule>Polyprotein pp220</molecule>
    <text evidence="1">The polyprotein is not glycosylated.</text>
</comment>
<comment type="PTM">
    <molecule>Polyprotein pp220</molecule>
    <text evidence="1">Specific enzymatic cleavages in vivo by the viral pS273R protease yield mature proteins.</text>
</comment>
<comment type="similarity">
    <text evidence="3">Belongs to the asfivirus polyprotein pp220 family.</text>
</comment>
<organismHost>
    <name type="scientific">Ornithodoros</name>
    <name type="common">relapsing fever ticks</name>
    <dbReference type="NCBI Taxonomy" id="6937"/>
</organismHost>
<organismHost>
    <name type="scientific">Phacochoerus aethiopicus</name>
    <name type="common">Warthog</name>
    <dbReference type="NCBI Taxonomy" id="85517"/>
</organismHost>
<organismHost>
    <name type="scientific">Phacochoerus africanus</name>
    <name type="common">Warthog</name>
    <dbReference type="NCBI Taxonomy" id="41426"/>
</organismHost>
<organismHost>
    <name type="scientific">Potamochoerus larvatus</name>
    <name type="common">Bushpig</name>
    <dbReference type="NCBI Taxonomy" id="273792"/>
</organismHost>
<organismHost>
    <name type="scientific">Sus scrofa</name>
    <name type="common">Pig</name>
    <dbReference type="NCBI Taxonomy" id="9823"/>
</organismHost>
<name>PP220_ASFK5</name>
<sequence length="2475" mass="281392">MGNRGSSTSSRPPLSSEANLYAKLQDHIQRQTRPFSGGGYFNGGGDKNPVQHIKDYHIDSVSSKAKLRIIEGIIKAISKIGFKVDTKQPIEDILKDIKKQLPDPRAGSTFVKNAEKQETICKMIADAINQEFIDLGQDKLIDTTEGAASICRQIVLYINSLTHGLRAEYLDVHGSIENTLENIKLLSDAIKQLHERMVTEVTKAAPNEEVINAVTMIEAVYRRLLNEQNLQINILTNFIDNILTPTQKELDKLKTDEVDIIKILNDTNSVLGTKNFGKVLSYTLCNLGIAATVANKINKALQRVGLKVEQYLHSKNWAEFDKELDLKRFSGLVSAENIAEFEKAVNLLRQTFNERHKILENNCAKKGGDGEKTPLDKRMEAQRLDRKHILMEFLNKSTQAYNDFLENVKKIGMKLVKEIALTPNITKLRDALSRINDMGTIALDLSLIGFYNNAAAREERETFLIQLTLVKNVLEELAKTDPNFKNLYDSCFRLLQIIDFYTDIVQKKYGGGEDCECTKVGGAALTVEELGLSKAARSQVDLNQAINTFMYYYYVAQIYSNLTHNKQEFQSYEENYATILGDAIAGRLMQLDTEKNARINSPAVDLARGHVGPNPGGAQEVDWKATISAIELEYDVKRRFYRALEGLDLYLKNITKTFVNNIDSIQTVQQMLDGVRIIGRWFTEATGDTLAQVFESFPTSAGNDSNVFTDNAPAGHYYEKVAAEIQQGRGVGTLRPVRASQAKNIRDLIGRSLSNFQALKNIINAFARIGDMLGGEELRQTVPMSPLQIYKTLLEYIQHSALSVGLKNLNQTQIGGQRVALAQTAEEASQRVYLSTVRVNDALSTRWETEDVFFTFMLKSMAAKIFIVLGIYDMFERPEPVYKLIPTRMILGGADELEPEVIPEAAGLYFRLPRLAEFYQKLFSFRDENVQISMLPELEGIFSGLIRVIFMRPIELINIGDYSETEIRQLIKEINVIYQHFNLEYGEQEAVKKALIHFVNEINRRFGVITRTEWEKFQRIVQEARTMNDFGMMNQTNYSILPDEDGYTQSSQLLPSDRFIGPSSQPTPKWRPALYNIDSVDVQTGMLQPNSQWDLVQKFRKQLSEMFEDPSLQQELGKVSYQELIQQATNELKKEHTDKIQIVSKLIQGSESLADTDVNKIFLFHETVITGLNLLSAIYVLLNTFRNNIKALDLDTIQKSIIEWLRETQAANVNRANLIDWLGRRHGDISEIRNPGLVIKANDARLSEVYPDPTTDATAPLDRNLVTETLFAWFTRFVGIPADGAVRPEQELAARYLVDNQRIMQLLLTNIFEMTSSFNKLVQVRFPETSTAHVHLDFTGLISLIDSLMADTKYFLDLLRPHIDKNIIQYYENRSNPGSFYWLEEHLIDKLIKPPTDAGGRPLPGGELGLEGVNQIINKTYILLTKPYNVLQLRGGAQRGNAANIQINNNPEFSERYEQYGRVFSRLVFYDALIENSGLRVEQVALGDFRLSNLIRTNNAQEENALSFWTAVAPRAYANVNDAANNLRRYRLYGSDYGIRNNRSMMMVFNQLVASYIARFYDAPSGKIYLNLINTFANGNFSQAVMELGYAHPDLARDNTAFGHRGDPTEQSVLLLSLGLMLQRLIKDTNRQGLSQHLISTLTEIPIYLKENYRANLPLFNKMFNILISQGELLKQFIQYTKVQLARPNLTALLGANNDSIIYYNNNNVPNTGLTVGQAALRGIGSVFRPDITLMPLGNAQNNTNDVVRKRLIAVINGIIRGSLTLANSAMEVLHELTDHPIYFETEEHFIQNYMSRYNKEPLMPFSLSLYYLRDLRIENNEVYDPLLYPNLESGSPEFKILYGTRKLLGNDPVQLSDMPGVQLIMKNYNETVVAREQITPTRFEHFYIHAIQALRFIINIRSFKTVMTYNENTFGGVNLIGEDRDDKPIITEGIGMNAVYSLRKTLQDVISFVESSYQEEQINNIHKIVSPRSQTRSLGSNRERERIFNLFDMNIMPINVNALMRSIPLANIYNYDYSFEEIACLMYGISAEKVRSLDTAAPQPDVAQVLNIPNRPPMNTREFMLKLLINPYVTVSITQYGNELLFRGNAGYMSRIFRGDNALNMGRPKFLSDQIFNKVLFGSLYPTQFDYDEAGPGLAAGIQRGREQWGQPLSDYINQALHELVRTIRIIPQNIRVLRNIMVKNQLIADLAAIREQLVRMRREVENMVQTPEIQNNPTPEVIAAAQTWTQQYRARVDFLINFIGNAQQPNSLIQLIQNITPLTVRAQLTTVFIRHGLPVPDPDQALQTDDEATQWFMTNIINQPITMIIPFTDLADDLRIFLETMERYVFNVPRWLGPSTGRVARVPVNMAPGNIRYRTSYTENNVLTYIAEQNQEEGPWSIVKQVGVGIQKPALIQIGKDRFDTRLIRNLIFITNIQRLLRLRLNLELSQFRNVLVSPNHIINPSITEYGFSITGPSETFSDKQYDSDIRIL</sequence>
<keyword id="KW-0175">Coiled coil</keyword>
<keyword id="KW-1035">Host cytoplasm</keyword>
<keyword id="KW-1048">Host nucleus</keyword>
<keyword id="KW-0426">Late protein</keyword>
<keyword id="KW-0449">Lipoprotein</keyword>
<keyword id="KW-0519">Myristate</keyword>
<keyword id="KW-0946">Virion</keyword>
<evidence type="ECO:0000250" key="1">
    <source>
        <dbReference type="UniProtKB" id="Q08358"/>
    </source>
</evidence>
<evidence type="ECO:0000255" key="2"/>
<evidence type="ECO:0000305" key="3"/>
<protein>
    <recommendedName>
        <fullName evidence="1">Polyprotein pp220</fullName>
    </recommendedName>
    <alternativeName>
        <fullName>220 kDa polyprotein</fullName>
    </alternativeName>
    <component>
        <recommendedName>
            <fullName evidence="1">p34</fullName>
        </recommendedName>
    </component>
    <component>
        <recommendedName>
            <fullName evidence="1">p14</fullName>
        </recommendedName>
    </component>
    <component>
        <recommendedName>
            <fullName evidence="1">p37</fullName>
        </recommendedName>
    </component>
    <component>
        <recommendedName>
            <fullName evidence="1">p150</fullName>
        </recommendedName>
    </component>
    <component>
        <recommendedName>
            <fullName evidence="1">p5</fullName>
        </recommendedName>
    </component>
</protein>